<sequence>MAGRLDEDLKDVTLLGNQNTKYLFEYSPEILEVFDNNHPNRDYFVKFNCPEFTSLCPKTGQPDFATIYISYIPEQRMVESKSLKLYLFSFRNHGDFHEDCMNVIMNDLIKLMDPRYIEVWGKFTPRGGISIDPYCNYGRPGTKYEQMADYRMMNHDLYPETIDNR</sequence>
<gene>
    <name evidence="1" type="primary">queF</name>
    <name type="ordered locus">BCAH187_A1500</name>
</gene>
<proteinExistence type="inferred from homology"/>
<dbReference type="EC" id="1.7.1.13" evidence="1"/>
<dbReference type="EMBL" id="CP001177">
    <property type="protein sequence ID" value="ACJ82084.1"/>
    <property type="molecule type" value="Genomic_DNA"/>
</dbReference>
<dbReference type="SMR" id="B7HK66"/>
<dbReference type="KEGG" id="bcr:BCAH187_A1500"/>
<dbReference type="HOGENOM" id="CLU_102489_0_1_9"/>
<dbReference type="UniPathway" id="UPA00392"/>
<dbReference type="Proteomes" id="UP000002214">
    <property type="component" value="Chromosome"/>
</dbReference>
<dbReference type="GO" id="GO:0005737">
    <property type="term" value="C:cytoplasm"/>
    <property type="evidence" value="ECO:0007669"/>
    <property type="project" value="UniProtKB-SubCell"/>
</dbReference>
<dbReference type="GO" id="GO:0033739">
    <property type="term" value="F:preQ1 synthase activity"/>
    <property type="evidence" value="ECO:0007669"/>
    <property type="project" value="UniProtKB-UniRule"/>
</dbReference>
<dbReference type="GO" id="GO:0008616">
    <property type="term" value="P:queuosine biosynthetic process"/>
    <property type="evidence" value="ECO:0007669"/>
    <property type="project" value="UniProtKB-UniRule"/>
</dbReference>
<dbReference type="GO" id="GO:0006400">
    <property type="term" value="P:tRNA modification"/>
    <property type="evidence" value="ECO:0007669"/>
    <property type="project" value="UniProtKB-UniRule"/>
</dbReference>
<dbReference type="Gene3D" id="3.30.1130.10">
    <property type="match status" value="1"/>
</dbReference>
<dbReference type="HAMAP" id="MF_00818">
    <property type="entry name" value="QueF_type1"/>
    <property type="match status" value="1"/>
</dbReference>
<dbReference type="InterPro" id="IPR043133">
    <property type="entry name" value="GTP-CH-I_C/QueF"/>
</dbReference>
<dbReference type="InterPro" id="IPR050084">
    <property type="entry name" value="NADPH_dep_7-cyano-7-deazaG_red"/>
</dbReference>
<dbReference type="InterPro" id="IPR029500">
    <property type="entry name" value="QueF"/>
</dbReference>
<dbReference type="InterPro" id="IPR016856">
    <property type="entry name" value="QueF_type1"/>
</dbReference>
<dbReference type="NCBIfam" id="TIGR03139">
    <property type="entry name" value="QueF-II"/>
    <property type="match status" value="1"/>
</dbReference>
<dbReference type="PANTHER" id="PTHR34354">
    <property type="entry name" value="NADPH-DEPENDENT 7-CYANO-7-DEAZAGUANINE REDUCTASE"/>
    <property type="match status" value="1"/>
</dbReference>
<dbReference type="PANTHER" id="PTHR34354:SF1">
    <property type="entry name" value="NADPH-DEPENDENT 7-CYANO-7-DEAZAGUANINE REDUCTASE"/>
    <property type="match status" value="1"/>
</dbReference>
<dbReference type="Pfam" id="PF14489">
    <property type="entry name" value="QueF"/>
    <property type="match status" value="1"/>
</dbReference>
<dbReference type="PIRSF" id="PIRSF027377">
    <property type="entry name" value="Nitrile_oxidored_QueF"/>
    <property type="match status" value="1"/>
</dbReference>
<dbReference type="SUPFAM" id="SSF55620">
    <property type="entry name" value="Tetrahydrobiopterin biosynthesis enzymes-like"/>
    <property type="match status" value="1"/>
</dbReference>
<comment type="function">
    <text evidence="1">Catalyzes the NADPH-dependent reduction of 7-cyano-7-deazaguanine (preQ0) to 7-aminomethyl-7-deazaguanine (preQ1).</text>
</comment>
<comment type="catalytic activity">
    <reaction evidence="1">
        <text>7-aminomethyl-7-carbaguanine + 2 NADP(+) = 7-cyano-7-deazaguanine + 2 NADPH + 3 H(+)</text>
        <dbReference type="Rhea" id="RHEA:13409"/>
        <dbReference type="ChEBI" id="CHEBI:15378"/>
        <dbReference type="ChEBI" id="CHEBI:45075"/>
        <dbReference type="ChEBI" id="CHEBI:57783"/>
        <dbReference type="ChEBI" id="CHEBI:58349"/>
        <dbReference type="ChEBI" id="CHEBI:58703"/>
        <dbReference type="EC" id="1.7.1.13"/>
    </reaction>
</comment>
<comment type="pathway">
    <text evidence="1">tRNA modification; tRNA-queuosine biosynthesis.</text>
</comment>
<comment type="subcellular location">
    <subcellularLocation>
        <location evidence="1">Cytoplasm</location>
    </subcellularLocation>
</comment>
<comment type="similarity">
    <text evidence="1">Belongs to the GTP cyclohydrolase I family. QueF type 1 subfamily.</text>
</comment>
<keyword id="KW-0963">Cytoplasm</keyword>
<keyword id="KW-0521">NADP</keyword>
<keyword id="KW-0560">Oxidoreductase</keyword>
<keyword id="KW-0671">Queuosine biosynthesis</keyword>
<name>QUEF_BACC7</name>
<feature type="chain" id="PRO_1000134295" description="NADPH-dependent 7-cyano-7-deazaguanine reductase">
    <location>
        <begin position="1"/>
        <end position="165"/>
    </location>
</feature>
<feature type="active site" description="Thioimide intermediate" evidence="1">
    <location>
        <position position="56"/>
    </location>
</feature>
<feature type="active site" description="Proton donor" evidence="1">
    <location>
        <position position="63"/>
    </location>
</feature>
<feature type="binding site" evidence="1">
    <location>
        <begin position="78"/>
        <end position="80"/>
    </location>
    <ligand>
        <name>substrate</name>
    </ligand>
</feature>
<feature type="binding site" evidence="1">
    <location>
        <begin position="97"/>
        <end position="98"/>
    </location>
    <ligand>
        <name>substrate</name>
    </ligand>
</feature>
<reference key="1">
    <citation type="submission" date="2008-10" db="EMBL/GenBank/DDBJ databases">
        <title>Genome sequence of Bacillus cereus AH187.</title>
        <authorList>
            <person name="Dodson R.J."/>
            <person name="Durkin A.S."/>
            <person name="Rosovitz M.J."/>
            <person name="Rasko D.A."/>
            <person name="Kolsto A.B."/>
            <person name="Okstad O.A."/>
            <person name="Ravel J."/>
            <person name="Sutton G."/>
        </authorList>
    </citation>
    <scope>NUCLEOTIDE SEQUENCE [LARGE SCALE GENOMIC DNA]</scope>
    <source>
        <strain>AH187</strain>
    </source>
</reference>
<accession>B7HK66</accession>
<organism>
    <name type="scientific">Bacillus cereus (strain AH187)</name>
    <dbReference type="NCBI Taxonomy" id="405534"/>
    <lineage>
        <taxon>Bacteria</taxon>
        <taxon>Bacillati</taxon>
        <taxon>Bacillota</taxon>
        <taxon>Bacilli</taxon>
        <taxon>Bacillales</taxon>
        <taxon>Bacillaceae</taxon>
        <taxon>Bacillus</taxon>
        <taxon>Bacillus cereus group</taxon>
    </lineage>
</organism>
<evidence type="ECO:0000255" key="1">
    <source>
        <dbReference type="HAMAP-Rule" id="MF_00818"/>
    </source>
</evidence>
<protein>
    <recommendedName>
        <fullName evidence="1">NADPH-dependent 7-cyano-7-deazaguanine reductase</fullName>
        <ecNumber evidence="1">1.7.1.13</ecNumber>
    </recommendedName>
    <alternativeName>
        <fullName evidence="1">7-cyano-7-carbaguanine reductase</fullName>
    </alternativeName>
    <alternativeName>
        <fullName evidence="1">NADPH-dependent nitrile oxidoreductase</fullName>
    </alternativeName>
    <alternativeName>
        <fullName evidence="1">PreQ(0) reductase</fullName>
    </alternativeName>
</protein>